<reference key="1">
    <citation type="journal article" date="2008" name="Antimicrob. Agents Chemother.">
        <title>Mutated response regulator graR is responsible for phenotypic conversion of Staphylococcus aureus from heterogeneous vancomycin-intermediate resistance to vancomycin-intermediate resistance.</title>
        <authorList>
            <person name="Neoh H.-M."/>
            <person name="Cui L."/>
            <person name="Yuzawa H."/>
            <person name="Takeuchi F."/>
            <person name="Matsuo M."/>
            <person name="Hiramatsu K."/>
        </authorList>
    </citation>
    <scope>NUCLEOTIDE SEQUENCE [LARGE SCALE GENOMIC DNA]</scope>
    <source>
        <strain>Mu3 / ATCC 700698</strain>
    </source>
</reference>
<gene>
    <name type="primary">mnhA1</name>
    <name type="ordered locus">SAHV_0947</name>
</gene>
<evidence type="ECO:0000250" key="1"/>
<evidence type="ECO:0000255" key="2"/>
<evidence type="ECO:0000305" key="3"/>
<proteinExistence type="inferred from homology"/>
<organism>
    <name type="scientific">Staphylococcus aureus (strain Mu3 / ATCC 700698)</name>
    <dbReference type="NCBI Taxonomy" id="418127"/>
    <lineage>
        <taxon>Bacteria</taxon>
        <taxon>Bacillati</taxon>
        <taxon>Bacillota</taxon>
        <taxon>Bacilli</taxon>
        <taxon>Bacillales</taxon>
        <taxon>Staphylococcaceae</taxon>
        <taxon>Staphylococcus</taxon>
    </lineage>
</organism>
<comment type="function">
    <text evidence="1">Mnh complex is a Na(+)/H(+) antiporter involved in Na(+) excretion.</text>
</comment>
<comment type="subunit">
    <text evidence="1">May form a heterooligomeric complex that consists of seven subunits: mnhA1, mnhB1, mnhC1, mnhD1, mnhE1, mnhF1 and mnhG1.</text>
</comment>
<comment type="subcellular location">
    <subcellularLocation>
        <location evidence="3">Cell membrane</location>
        <topology evidence="3">Multi-pass membrane protein</topology>
    </subcellularLocation>
</comment>
<comment type="similarity">
    <text evidence="3">Belongs to the CPA3 antiporters (TC 2.A.63) subunit A family.</text>
</comment>
<keyword id="KW-0050">Antiport</keyword>
<keyword id="KW-1003">Cell membrane</keyword>
<keyword id="KW-0375">Hydrogen ion transport</keyword>
<keyword id="KW-0406">Ion transport</keyword>
<keyword id="KW-0472">Membrane</keyword>
<keyword id="KW-0915">Sodium</keyword>
<keyword id="KW-0739">Sodium transport</keyword>
<keyword id="KW-0812">Transmembrane</keyword>
<keyword id="KW-1133">Transmembrane helix</keyword>
<keyword id="KW-0813">Transport</keyword>
<protein>
    <recommendedName>
        <fullName>Na(+)/H(+) antiporter subunit A1</fullName>
    </recommendedName>
    <alternativeName>
        <fullName>Mnh complex subunit A1</fullName>
    </alternativeName>
</protein>
<accession>A7X0G4</accession>
<feature type="chain" id="PRO_0000372096" description="Na(+)/H(+) antiporter subunit A1">
    <location>
        <begin position="1"/>
        <end position="801"/>
    </location>
</feature>
<feature type="transmembrane region" description="Helical" evidence="2">
    <location>
        <begin position="1"/>
        <end position="21"/>
    </location>
</feature>
<feature type="transmembrane region" description="Helical" evidence="2">
    <location>
        <begin position="28"/>
        <end position="48"/>
    </location>
</feature>
<feature type="transmembrane region" description="Helical" evidence="2">
    <location>
        <begin position="79"/>
        <end position="99"/>
    </location>
</feature>
<feature type="transmembrane region" description="Helical" evidence="2">
    <location>
        <begin position="117"/>
        <end position="137"/>
    </location>
</feature>
<feature type="transmembrane region" description="Helical" evidence="2">
    <location>
        <begin position="166"/>
        <end position="186"/>
    </location>
</feature>
<feature type="transmembrane region" description="Helical" evidence="2">
    <location>
        <begin position="206"/>
        <end position="226"/>
    </location>
</feature>
<feature type="transmembrane region" description="Helical" evidence="2">
    <location>
        <begin position="265"/>
        <end position="285"/>
    </location>
</feature>
<feature type="transmembrane region" description="Helical" evidence="2">
    <location>
        <begin position="300"/>
        <end position="320"/>
    </location>
</feature>
<feature type="transmembrane region" description="Helical" evidence="2">
    <location>
        <begin position="337"/>
        <end position="357"/>
    </location>
</feature>
<feature type="transmembrane region" description="Helical" evidence="2">
    <location>
        <begin position="373"/>
        <end position="393"/>
    </location>
</feature>
<feature type="transmembrane region" description="Helical" evidence="2">
    <location>
        <begin position="427"/>
        <end position="447"/>
    </location>
</feature>
<feature type="transmembrane region" description="Helical" evidence="2">
    <location>
        <begin position="472"/>
        <end position="492"/>
    </location>
</feature>
<feature type="transmembrane region" description="Helical" evidence="2">
    <location>
        <begin position="522"/>
        <end position="542"/>
    </location>
</feature>
<feature type="transmembrane region" description="Helical" evidence="2">
    <location>
        <begin position="591"/>
        <end position="611"/>
    </location>
</feature>
<feature type="transmembrane region" description="Helical" evidence="2">
    <location>
        <begin position="623"/>
        <end position="643"/>
    </location>
</feature>
<feature type="transmembrane region" description="Helical" evidence="2">
    <location>
        <begin position="646"/>
        <end position="666"/>
    </location>
</feature>
<feature type="transmembrane region" description="Helical" evidence="2">
    <location>
        <begin position="671"/>
        <end position="691"/>
    </location>
</feature>
<feature type="transmembrane region" description="Helical" evidence="2">
    <location>
        <begin position="707"/>
        <end position="727"/>
    </location>
</feature>
<feature type="transmembrane region" description="Helical" evidence="2">
    <location>
        <begin position="764"/>
        <end position="784"/>
    </location>
</feature>
<sequence length="801" mass="89362">MSLLHIAVILPLIFALIIPILYRFFKRIHLGWFVLPVPIVIFIYMLTLIKTTMSGNTVMKTLNWMPHFGMNFDLYLDGLGLLFSLLISGIGSLVVLYSIGYLSKSEQLGNFYCYLLLFMGAMLGVVLSDNVIILYLFWELTSFSSFLLISFWRERQASIYGAQKSLIITVFGGLSLLGGIILLAIPTQSFSIQYMIQHASEIQNSPFFIFAMILIMIGAFTKSAQFPFYIWLPDAMEAPTPVSAYLHSATMVKAGLYLIARMTPIFAASQGWVWTVTLVGLITLFWASLNATKQQDLKGILAFSTVSQLGMIMAMLGIGAISYHYQGDDSKIYAAAFTAAIFHLINHATFKGALFMITGAVDHSTGTRDVKKLGGLLTIMPISFTITVITALSMAGVPPFNGFLSKESFLETTFTASQANLFSVDTLGYLFPIIGIVGSVFTFVYSIKFIMHIFFGQYKPEQLPKKAHEVSILMLLSPAILATLVIVLGLFPGILTNSIIEPATSSINHTVIDDVEFHMFHGLTPAFLSTLVIYILGILLIVTFSYWVKLLQRQPGKLTFNYWYNRSANVIPNYSEKMTNSYVTDYSRNNLVIIFGALILLTFVTIFSVPFNINFKDVSPIRIFEVCIVILLLSAAFLILFAKSRLFSIIMLSAVGYAVSVLFIFFKAPDLALTQFVVESISTALFLLCFYHLPNLNRYNEKRSFQLTNALIAGGVGLSVIIIGLIAYGNRHFESISKFYQEHVYDLAHGKNMVNVILVDFRGMDTLFESSVLGIAGLAVYTMIKLRKKRQTQGNEVKNHE</sequence>
<dbReference type="EMBL" id="AP009324">
    <property type="protein sequence ID" value="BAF77830.1"/>
    <property type="molecule type" value="Genomic_DNA"/>
</dbReference>
<dbReference type="RefSeq" id="WP_000054612.1">
    <property type="nucleotide sequence ID" value="NC_009782.1"/>
</dbReference>
<dbReference type="SMR" id="A7X0G4"/>
<dbReference type="KEGG" id="saw:SAHV_0947"/>
<dbReference type="HOGENOM" id="CLU_007100_2_1_9"/>
<dbReference type="GO" id="GO:0005886">
    <property type="term" value="C:plasma membrane"/>
    <property type="evidence" value="ECO:0007669"/>
    <property type="project" value="UniProtKB-SubCell"/>
</dbReference>
<dbReference type="GO" id="GO:0015297">
    <property type="term" value="F:antiporter activity"/>
    <property type="evidence" value="ECO:0007669"/>
    <property type="project" value="UniProtKB-KW"/>
</dbReference>
<dbReference type="GO" id="GO:1902600">
    <property type="term" value="P:proton transmembrane transport"/>
    <property type="evidence" value="ECO:0007669"/>
    <property type="project" value="UniProtKB-KW"/>
</dbReference>
<dbReference type="GO" id="GO:0006814">
    <property type="term" value="P:sodium ion transport"/>
    <property type="evidence" value="ECO:0007669"/>
    <property type="project" value="UniProtKB-KW"/>
</dbReference>
<dbReference type="InterPro" id="IPR050616">
    <property type="entry name" value="CPA3_Na-H_Antiporter_A"/>
</dbReference>
<dbReference type="InterPro" id="IPR005663">
    <property type="entry name" value="MrpA/MnhA1/PhaAB"/>
</dbReference>
<dbReference type="InterPro" id="IPR025383">
    <property type="entry name" value="MrpA_C/MbhD"/>
</dbReference>
<dbReference type="InterPro" id="IPR046806">
    <property type="entry name" value="MrpA_C/MbhE"/>
</dbReference>
<dbReference type="InterPro" id="IPR001750">
    <property type="entry name" value="ND/Mrp_TM"/>
</dbReference>
<dbReference type="InterPro" id="IPR001516">
    <property type="entry name" value="Proton_antipo_N"/>
</dbReference>
<dbReference type="NCBIfam" id="TIGR00940">
    <property type="entry name" value="2a6301s01"/>
    <property type="match status" value="1"/>
</dbReference>
<dbReference type="NCBIfam" id="NF009285">
    <property type="entry name" value="PRK12645.1"/>
    <property type="match status" value="1"/>
</dbReference>
<dbReference type="PANTHER" id="PTHR43373">
    <property type="entry name" value="NA(+)/H(+) ANTIPORTER SUBUNIT"/>
    <property type="match status" value="1"/>
</dbReference>
<dbReference type="PANTHER" id="PTHR43373:SF1">
    <property type="entry name" value="NA(+)_H(+) ANTIPORTER SUBUNIT A"/>
    <property type="match status" value="1"/>
</dbReference>
<dbReference type="Pfam" id="PF13244">
    <property type="entry name" value="MbhD"/>
    <property type="match status" value="1"/>
</dbReference>
<dbReference type="Pfam" id="PF20501">
    <property type="entry name" value="MbhE"/>
    <property type="match status" value="1"/>
</dbReference>
<dbReference type="Pfam" id="PF00361">
    <property type="entry name" value="Proton_antipo_M"/>
    <property type="match status" value="1"/>
</dbReference>
<dbReference type="Pfam" id="PF00662">
    <property type="entry name" value="Proton_antipo_N"/>
    <property type="match status" value="1"/>
</dbReference>
<dbReference type="PRINTS" id="PR01434">
    <property type="entry name" value="NADHDHGNASE5"/>
</dbReference>
<dbReference type="PRINTS" id="PR01435">
    <property type="entry name" value="NPOXDRDTASE5"/>
</dbReference>
<name>MNHA1_STAA1</name>